<feature type="signal peptide" evidence="2">
    <location>
        <begin position="1"/>
        <end position="23"/>
    </location>
</feature>
<feature type="chain" id="PRO_0000355297" description="Snaclec mucrocetin subunit alpha">
    <location>
        <begin position="24"/>
        <end position="158"/>
    </location>
</feature>
<feature type="domain" description="C-type lectin" evidence="1">
    <location>
        <begin position="34"/>
        <end position="153"/>
    </location>
</feature>
<feature type="disulfide bond" evidence="1 2">
    <location>
        <begin position="27"/>
        <end position="38"/>
    </location>
</feature>
<feature type="disulfide bond" evidence="1 2">
    <location>
        <begin position="55"/>
        <end position="152"/>
    </location>
</feature>
<feature type="disulfide bond" description="Interchain (with C-100 in subunit beta of heterodimeric partner)" evidence="1 2">
    <location>
        <position position="104"/>
    </location>
</feature>
<feature type="disulfide bond" evidence="1 2">
    <location>
        <begin position="127"/>
        <end position="144"/>
    </location>
</feature>
<feature type="disulfide bond" description="Interchain (with C-26 in subunit beta of tetrameric partner)" evidence="1 2">
    <location>
        <position position="158"/>
    </location>
</feature>
<feature type="strand" evidence="4">
    <location>
        <begin position="32"/>
        <end position="34"/>
    </location>
</feature>
<feature type="strand" evidence="4">
    <location>
        <begin position="37"/>
        <end position="46"/>
    </location>
</feature>
<feature type="helix" evidence="4">
    <location>
        <begin position="48"/>
        <end position="57"/>
    </location>
</feature>
<feature type="strand" evidence="4">
    <location>
        <begin position="62"/>
        <end position="64"/>
    </location>
</feature>
<feature type="helix" evidence="4">
    <location>
        <begin position="70"/>
        <end position="81"/>
    </location>
</feature>
<feature type="strand" evidence="4">
    <location>
        <begin position="89"/>
        <end position="97"/>
    </location>
</feature>
<feature type="strand" evidence="4">
    <location>
        <begin position="101"/>
        <end position="104"/>
    </location>
</feature>
<feature type="helix" evidence="4">
    <location>
        <begin position="121"/>
        <end position="123"/>
    </location>
</feature>
<feature type="strand" evidence="4">
    <location>
        <begin position="127"/>
        <end position="131"/>
    </location>
</feature>
<feature type="strand" evidence="4">
    <location>
        <begin position="138"/>
        <end position="142"/>
    </location>
</feature>
<feature type="strand" evidence="4">
    <location>
        <begin position="148"/>
        <end position="154"/>
    </location>
</feature>
<protein>
    <recommendedName>
        <fullName>Snaclec mucrocetin subunit alpha</fullName>
    </recommendedName>
</protein>
<evidence type="ECO:0000255" key="1">
    <source>
        <dbReference type="PROSITE-ProRule" id="PRU00040"/>
    </source>
</evidence>
<evidence type="ECO:0000269" key="2">
    <source>
    </source>
</evidence>
<evidence type="ECO:0000305" key="3"/>
<evidence type="ECO:0007829" key="4">
    <source>
        <dbReference type="PDB" id="1V4L"/>
    </source>
</evidence>
<keyword id="KW-0002">3D-structure</keyword>
<keyword id="KW-0903">Direct protein sequencing</keyword>
<keyword id="KW-1015">Disulfide bond</keyword>
<keyword id="KW-1199">Hemostasis impairing toxin</keyword>
<keyword id="KW-1202">Platelet aggregation activating toxin</keyword>
<keyword id="KW-0964">Secreted</keyword>
<keyword id="KW-0732">Signal</keyword>
<keyword id="KW-0800">Toxin</keyword>
<proteinExistence type="evidence at protein level"/>
<name>SLOA_PROMU</name>
<organism>
    <name type="scientific">Protobothrops mucrosquamatus</name>
    <name type="common">Taiwan habu</name>
    <name type="synonym">Trimeresurus mucrosquamatus</name>
    <dbReference type="NCBI Taxonomy" id="103944"/>
    <lineage>
        <taxon>Eukaryota</taxon>
        <taxon>Metazoa</taxon>
        <taxon>Chordata</taxon>
        <taxon>Craniata</taxon>
        <taxon>Vertebrata</taxon>
        <taxon>Euteleostomi</taxon>
        <taxon>Lepidosauria</taxon>
        <taxon>Squamata</taxon>
        <taxon>Bifurcata</taxon>
        <taxon>Unidentata</taxon>
        <taxon>Episquamata</taxon>
        <taxon>Toxicofera</taxon>
        <taxon>Serpentes</taxon>
        <taxon>Colubroidea</taxon>
        <taxon>Viperidae</taxon>
        <taxon>Crotalinae</taxon>
        <taxon>Protobothrops</taxon>
    </lineage>
</organism>
<comment type="function">
    <text>Platelet-agglutinating factor that acts in a vWF-independent manner. Binds specifically to platelet GPIbalpha (GP1BA) to a distinct binding site from that of flavocetin-A.</text>
</comment>
<comment type="subunit">
    <text evidence="2">Tetramer of heterodimers of alpha and beta subunits (alphabeta)(4); disulfide-linked.</text>
</comment>
<comment type="subcellular location">
    <subcellularLocation>
        <location>Secreted</location>
    </subcellularLocation>
</comment>
<comment type="tissue specificity">
    <text>Expressed by the venom gland.</text>
</comment>
<comment type="similarity">
    <text evidence="3">Belongs to the snaclec family.</text>
</comment>
<accession>Q6TPH0</accession>
<sequence>MGRFIFVSFGLLVVFLSLSGTGADFDCIPGWSAYDRYCYQAFSEPKNWEDAESFCEEGVKTSHLVSIESSGEGDFVAQLVAEKIKTSFQYVWIGLRIQNKEQQCRSEWSDASSVNYENLYKQSSKKCYALKKGTELRTWFNVYCGRENPFVCKYTPEC</sequence>
<dbReference type="EMBL" id="AY390533">
    <property type="protein sequence ID" value="AAQ93686.1"/>
    <property type="molecule type" value="mRNA"/>
</dbReference>
<dbReference type="PDB" id="1V4L">
    <property type="method" value="X-ray"/>
    <property type="resolution" value="2.80 A"/>
    <property type="chains" value="A/C/E=24-158"/>
</dbReference>
<dbReference type="PDBsum" id="1V4L"/>
<dbReference type="SMR" id="Q6TPH0"/>
<dbReference type="EvolutionaryTrace" id="Q6TPH0"/>
<dbReference type="GO" id="GO:0005576">
    <property type="term" value="C:extracellular region"/>
    <property type="evidence" value="ECO:0007669"/>
    <property type="project" value="UniProtKB-SubCell"/>
</dbReference>
<dbReference type="GO" id="GO:0090729">
    <property type="term" value="F:toxin activity"/>
    <property type="evidence" value="ECO:0007669"/>
    <property type="project" value="UniProtKB-KW"/>
</dbReference>
<dbReference type="FunFam" id="3.10.100.10:FF:000087">
    <property type="entry name" value="Snaclec rhodocetin subunit delta"/>
    <property type="match status" value="1"/>
</dbReference>
<dbReference type="Gene3D" id="3.10.100.10">
    <property type="entry name" value="Mannose-Binding Protein A, subunit A"/>
    <property type="match status" value="1"/>
</dbReference>
<dbReference type="InterPro" id="IPR001304">
    <property type="entry name" value="C-type_lectin-like"/>
</dbReference>
<dbReference type="InterPro" id="IPR016186">
    <property type="entry name" value="C-type_lectin-like/link_sf"/>
</dbReference>
<dbReference type="InterPro" id="IPR050111">
    <property type="entry name" value="C-type_lectin/snaclec_domain"/>
</dbReference>
<dbReference type="InterPro" id="IPR018378">
    <property type="entry name" value="C-type_lectin_CS"/>
</dbReference>
<dbReference type="InterPro" id="IPR016187">
    <property type="entry name" value="CTDL_fold"/>
</dbReference>
<dbReference type="PANTHER" id="PTHR22803">
    <property type="entry name" value="MANNOSE, PHOSPHOLIPASE, LECTIN RECEPTOR RELATED"/>
    <property type="match status" value="1"/>
</dbReference>
<dbReference type="Pfam" id="PF00059">
    <property type="entry name" value="Lectin_C"/>
    <property type="match status" value="1"/>
</dbReference>
<dbReference type="PRINTS" id="PR01504">
    <property type="entry name" value="PNCREATITSAP"/>
</dbReference>
<dbReference type="SMART" id="SM00034">
    <property type="entry name" value="CLECT"/>
    <property type="match status" value="1"/>
</dbReference>
<dbReference type="SUPFAM" id="SSF56436">
    <property type="entry name" value="C-type lectin-like"/>
    <property type="match status" value="1"/>
</dbReference>
<dbReference type="PROSITE" id="PS00615">
    <property type="entry name" value="C_TYPE_LECTIN_1"/>
    <property type="match status" value="1"/>
</dbReference>
<dbReference type="PROSITE" id="PS50041">
    <property type="entry name" value="C_TYPE_LECTIN_2"/>
    <property type="match status" value="1"/>
</dbReference>
<reference key="1">
    <citation type="journal article" date="2004" name="Biochem. J.">
        <title>Crystal structure of a platelet-agglutinating factor isolated from the venom of Taiwan habu (Trimeresurus mucrosquamatus).</title>
        <authorList>
            <person name="Huang K.-F."/>
            <person name="Ko T.-P."/>
            <person name="Hung C.-C."/>
            <person name="Chu J."/>
            <person name="Wang A.H.-J."/>
            <person name="Chiou S.-H."/>
        </authorList>
    </citation>
    <scope>NUCLEOTIDE SEQUENCE [MRNA]</scope>
    <scope>PROTEIN SEQUENCE OF 24-49</scope>
    <scope>X-RAY CRYSTALLOGRAPHY (2.8 ANGSTROMS) OF 24-158</scope>
    <scope>SUBUNIT</scope>
    <scope>DISULFIDE BONDS</scope>
    <source>
        <strain>Taiwan</strain>
        <tissue>Venom</tissue>
        <tissue>Venom gland</tissue>
    </source>
</reference>